<keyword id="KW-0106">Calcium</keyword>
<keyword id="KW-0134">Cell wall</keyword>
<keyword id="KW-0903">Direct protein sequencing</keyword>
<keyword id="KW-0349">Heme</keyword>
<keyword id="KW-0376">Hydrogen peroxide</keyword>
<keyword id="KW-0408">Iron</keyword>
<keyword id="KW-0479">Metal-binding</keyword>
<keyword id="KW-0560">Oxidoreductase</keyword>
<keyword id="KW-0575">Peroxidase</keyword>
<keyword id="KW-0964">Secreted</keyword>
<comment type="function">
    <text evidence="5">Removal of H(2)O(2), oxidation of toxic reductants, biosynthesis and degradation of lignin, suberization, auxin catabolism, response to environmental stresses such as wounding, pathogen attack and oxidative stress. These functions might be dependent on each isozyme/isoform in each plant tissue.</text>
</comment>
<comment type="catalytic activity">
    <reaction>
        <text>2 a phenolic donor + H2O2 = 2 a phenolic radical donor + 2 H2O</text>
        <dbReference type="Rhea" id="RHEA:56136"/>
        <dbReference type="ChEBI" id="CHEBI:15377"/>
        <dbReference type="ChEBI" id="CHEBI:16240"/>
        <dbReference type="ChEBI" id="CHEBI:139520"/>
        <dbReference type="ChEBI" id="CHEBI:139521"/>
        <dbReference type="EC" id="1.11.1.7"/>
    </reaction>
</comment>
<comment type="cofactor">
    <cofactor evidence="1 2">
        <name>heme b</name>
        <dbReference type="ChEBI" id="CHEBI:60344"/>
    </cofactor>
    <text evidence="1 2">Binds 1 heme b (iron(II)-protoporphyrin IX) group per subunit.</text>
</comment>
<comment type="cofactor">
    <cofactor evidence="1 2">
        <name>Ca(2+)</name>
        <dbReference type="ChEBI" id="CHEBI:29108"/>
    </cofactor>
    <text evidence="1 2">Binds 2 calcium ions per subunit.</text>
</comment>
<comment type="subcellular location">
    <subcellularLocation>
        <location evidence="1 2">Secreted</location>
    </subcellularLocation>
    <subcellularLocation>
        <location evidence="3">Secreted</location>
        <location evidence="3">Cell wall</location>
    </subcellularLocation>
</comment>
<comment type="similarity">
    <text evidence="2 3">Belongs to the peroxidase family. Classical plant (class III) peroxidase subfamily.</text>
</comment>
<feature type="chain" id="PRO_0000355099" description="Peroxidase 9">
    <location>
        <begin position="1" status="less than"/>
        <end position="9" status="greater than"/>
    </location>
</feature>
<feature type="non-terminal residue" evidence="4">
    <location>
        <position position="1"/>
    </location>
</feature>
<feature type="non-terminal residue" evidence="4">
    <location>
        <position position="9"/>
    </location>
</feature>
<accession>P85976</accession>
<name>PER9_CYCRE</name>
<protein>
    <recommendedName>
        <fullName evidence="1">Peroxidase 9</fullName>
        <ecNumber>1.11.1.7</ecNumber>
    </recommendedName>
</protein>
<dbReference type="EC" id="1.11.1.7"/>
<dbReference type="GO" id="GO:0005576">
    <property type="term" value="C:extracellular region"/>
    <property type="evidence" value="ECO:0007669"/>
    <property type="project" value="UniProtKB-SubCell"/>
</dbReference>
<dbReference type="GO" id="GO:0140825">
    <property type="term" value="F:lactoperoxidase activity"/>
    <property type="evidence" value="ECO:0007669"/>
    <property type="project" value="UniProtKB-EC"/>
</dbReference>
<dbReference type="GO" id="GO:0046872">
    <property type="term" value="F:metal ion binding"/>
    <property type="evidence" value="ECO:0007669"/>
    <property type="project" value="UniProtKB-KW"/>
</dbReference>
<dbReference type="GO" id="GO:0042744">
    <property type="term" value="P:hydrogen peroxide catabolic process"/>
    <property type="evidence" value="ECO:0007669"/>
    <property type="project" value="UniProtKB-KW"/>
</dbReference>
<reference evidence="5" key="1">
    <citation type="journal article" date="2009" name="J. Plant Physiol.">
        <title>Analysis of the soluble cell wall proteome of gymnosperms.</title>
        <authorList>
            <person name="Uzal E.N."/>
            <person name="Gomez-Ros L.V."/>
            <person name="Hernandez J.A."/>
            <person name="Pedreno M.A."/>
            <person name="Cuello J."/>
            <person name="Ros Barcelo A."/>
        </authorList>
    </citation>
    <scope>PROTEIN SEQUENCE</scope>
    <scope>SUBCELLULAR LOCATION</scope>
    <source>
        <tissue evidence="3">Callus</tissue>
    </source>
</reference>
<evidence type="ECO:0000250" key="1">
    <source>
        <dbReference type="UniProtKB" id="Q42578"/>
    </source>
</evidence>
<evidence type="ECO:0000255" key="2">
    <source>
        <dbReference type="PROSITE-ProRule" id="PRU00297"/>
    </source>
</evidence>
<evidence type="ECO:0000269" key="3">
    <source>
    </source>
</evidence>
<evidence type="ECO:0000303" key="4">
    <source>
    </source>
</evidence>
<evidence type="ECO:0000305" key="5"/>
<organism>
    <name type="scientific">Cycas revoluta</name>
    <name type="common">Sago palm</name>
    <dbReference type="NCBI Taxonomy" id="3396"/>
    <lineage>
        <taxon>Eukaryota</taxon>
        <taxon>Viridiplantae</taxon>
        <taxon>Streptophyta</taxon>
        <taxon>Embryophyta</taxon>
        <taxon>Tracheophyta</taxon>
        <taxon>Spermatophyta</taxon>
        <taxon>Cycadidae</taxon>
        <taxon>Cycadales</taxon>
        <taxon>Cycadaceae</taxon>
        <taxon>Cycas</taxon>
    </lineage>
</organism>
<sequence>AFEIINDIK</sequence>
<proteinExistence type="evidence at protein level"/>